<name>S2540_XENTR</name>
<gene>
    <name evidence="2" type="primary">slc25a40</name>
</gene>
<reference key="1">
    <citation type="submission" date="2003-12" db="EMBL/GenBank/DDBJ databases">
        <authorList>
            <consortium name="NIH - Xenopus Gene Collection (XGC) project"/>
        </authorList>
    </citation>
    <scope>NUCLEOTIDE SEQUENCE [LARGE SCALE MRNA]</scope>
    <source>
        <tissue>Embryo</tissue>
    </source>
</reference>
<sequence length="341" mass="38259">MQKNTEPVQEAINITPSQQMIASSMGALLTSFFVTPLDVVKIRLQAQSKPFIKGKCFVYCNGLMDHLCLCTNGNGKAWYRAPGHFRGTTDAFVQIIRNEGIKSLWSGLPPTLVMAVPATVIYFTCYDQLRDILIRSMPERAEIASLVAGATARLWSATLISPLELIRTKMQYRPLSYKELRQCIQSSVAKDGWLALWKGWGPTVLRDVPFSALYWHNYELVKQSLCQRYNTLQPTFAISFTAGAVSGSIAAIVTLPFDVVKTRRQVEVGELEMFTYSQKRSSSTWKLMRAIVIENGFGGLFAGLIPRLIKVAPACAIMISTYEFGKSFFRKLNNERQLKSL</sequence>
<evidence type="ECO:0000250" key="1">
    <source>
        <dbReference type="UniProtKB" id="Q8BGP6"/>
    </source>
</evidence>
<evidence type="ECO:0000250" key="2">
    <source>
        <dbReference type="UniProtKB" id="Q8TBP6"/>
    </source>
</evidence>
<evidence type="ECO:0000250" key="3">
    <source>
        <dbReference type="UniProtKB" id="Q9BZJ4"/>
    </source>
</evidence>
<evidence type="ECO:0000255" key="4"/>
<evidence type="ECO:0000305" key="5"/>
<organism>
    <name type="scientific">Xenopus tropicalis</name>
    <name type="common">Western clawed frog</name>
    <name type="synonym">Silurana tropicalis</name>
    <dbReference type="NCBI Taxonomy" id="8364"/>
    <lineage>
        <taxon>Eukaryota</taxon>
        <taxon>Metazoa</taxon>
        <taxon>Chordata</taxon>
        <taxon>Craniata</taxon>
        <taxon>Vertebrata</taxon>
        <taxon>Euteleostomi</taxon>
        <taxon>Amphibia</taxon>
        <taxon>Batrachia</taxon>
        <taxon>Anura</taxon>
        <taxon>Pipoidea</taxon>
        <taxon>Pipidae</taxon>
        <taxon>Xenopodinae</taxon>
        <taxon>Xenopus</taxon>
        <taxon>Silurana</taxon>
    </lineage>
</organism>
<feature type="chain" id="PRO_0000291814" description="Mitochondrial glutathione transporter SLC25A40">
    <location>
        <begin position="1"/>
        <end position="341"/>
    </location>
</feature>
<feature type="transmembrane region" description="Helical; Name=1" evidence="4">
    <location>
        <begin position="20"/>
        <end position="40"/>
    </location>
</feature>
<feature type="transmembrane region" description="Helical; Name=2" evidence="4">
    <location>
        <begin position="104"/>
        <end position="124"/>
    </location>
</feature>
<feature type="transmembrane region" description="Helical; Name=3" evidence="4">
    <location>
        <begin position="143"/>
        <end position="163"/>
    </location>
</feature>
<feature type="transmembrane region" description="Helical; Name=4" evidence="4">
    <location>
        <begin position="200"/>
        <end position="221"/>
    </location>
</feature>
<feature type="transmembrane region" description="Helical; Name=5" evidence="4">
    <location>
        <begin position="236"/>
        <end position="256"/>
    </location>
</feature>
<feature type="transmembrane region" description="Helical; Name=6" evidence="4">
    <location>
        <begin position="299"/>
        <end position="319"/>
    </location>
</feature>
<feature type="repeat" description="Solcar 1">
    <location>
        <begin position="14"/>
        <end position="132"/>
    </location>
</feature>
<feature type="repeat" description="Solcar 2">
    <location>
        <begin position="140"/>
        <end position="224"/>
    </location>
</feature>
<feature type="repeat" description="Solcar 3">
    <location>
        <begin position="234"/>
        <end position="328"/>
    </location>
</feature>
<keyword id="KW-0472">Membrane</keyword>
<keyword id="KW-0496">Mitochondrion</keyword>
<keyword id="KW-0999">Mitochondrion inner membrane</keyword>
<keyword id="KW-1185">Reference proteome</keyword>
<keyword id="KW-0677">Repeat</keyword>
<keyword id="KW-0812">Transmembrane</keyword>
<keyword id="KW-1133">Transmembrane helix</keyword>
<keyword id="KW-0813">Transport</keyword>
<protein>
    <recommendedName>
        <fullName evidence="5">Mitochondrial glutathione transporter SLC25A40</fullName>
    </recommendedName>
    <alternativeName>
        <fullName evidence="5">Solute carrier family 25 member 40</fullName>
    </alternativeName>
</protein>
<dbReference type="EMBL" id="BC064218">
    <property type="protein sequence ID" value="AAH64218.1"/>
    <property type="molecule type" value="mRNA"/>
</dbReference>
<dbReference type="EMBL" id="BC075453">
    <property type="protein sequence ID" value="AAH75453.1"/>
    <property type="molecule type" value="mRNA"/>
</dbReference>
<dbReference type="RefSeq" id="NP_989316.1">
    <property type="nucleotide sequence ID" value="NM_203985.1"/>
</dbReference>
<dbReference type="RefSeq" id="XP_012819921.1">
    <property type="nucleotide sequence ID" value="XM_012964467.3"/>
</dbReference>
<dbReference type="RefSeq" id="XP_017950087.1">
    <property type="nucleotide sequence ID" value="XM_018094598.1"/>
</dbReference>
<dbReference type="SMR" id="Q6P316"/>
<dbReference type="FunCoup" id="Q6P316">
    <property type="interactions" value="1509"/>
</dbReference>
<dbReference type="STRING" id="8364.ENSXETP00000033277"/>
<dbReference type="PaxDb" id="8364-ENSXETP00000063269"/>
<dbReference type="DNASU" id="394941"/>
<dbReference type="GeneID" id="394941"/>
<dbReference type="KEGG" id="xtr:394941"/>
<dbReference type="AGR" id="Xenbase:XB-GENE-1003942"/>
<dbReference type="CTD" id="55972"/>
<dbReference type="Xenbase" id="XB-GENE-1003942">
    <property type="gene designation" value="slc25a40"/>
</dbReference>
<dbReference type="eggNOG" id="KOG0761">
    <property type="taxonomic scope" value="Eukaryota"/>
</dbReference>
<dbReference type="HOGENOM" id="CLU_015166_0_0_1"/>
<dbReference type="InParanoid" id="Q6P316"/>
<dbReference type="OMA" id="YWWGYES"/>
<dbReference type="OrthoDB" id="1747031at2759"/>
<dbReference type="PhylomeDB" id="Q6P316"/>
<dbReference type="Proteomes" id="UP000008143">
    <property type="component" value="Chromosome 6"/>
</dbReference>
<dbReference type="Bgee" id="ENSXETG00000027655">
    <property type="expression patterns" value="Expressed in skeletal muscle tissue and 13 other cell types or tissues"/>
</dbReference>
<dbReference type="GO" id="GO:0005743">
    <property type="term" value="C:mitochondrial inner membrane"/>
    <property type="evidence" value="ECO:0007669"/>
    <property type="project" value="UniProtKB-SubCell"/>
</dbReference>
<dbReference type="GO" id="GO:1990542">
    <property type="term" value="P:mitochondrial transmembrane transport"/>
    <property type="evidence" value="ECO:0007669"/>
    <property type="project" value="InterPro"/>
</dbReference>
<dbReference type="Gene3D" id="1.50.40.10">
    <property type="entry name" value="Mitochondrial carrier domain"/>
    <property type="match status" value="2"/>
</dbReference>
<dbReference type="InterPro" id="IPR002067">
    <property type="entry name" value="Mit_carrier"/>
</dbReference>
<dbReference type="InterPro" id="IPR018108">
    <property type="entry name" value="Mitochondrial_sb/sol_carrier"/>
</dbReference>
<dbReference type="InterPro" id="IPR023395">
    <property type="entry name" value="Mt_carrier_dom_sf"/>
</dbReference>
<dbReference type="InterPro" id="IPR045315">
    <property type="entry name" value="Mtm1-like"/>
</dbReference>
<dbReference type="PANTHER" id="PTHR45760">
    <property type="entry name" value="FI19922P1-RELATED"/>
    <property type="match status" value="1"/>
</dbReference>
<dbReference type="PANTHER" id="PTHR45760:SF5">
    <property type="entry name" value="MITOCHONDRIAL GLUTATHIONE TRANSPORTER SLC25A40-RELATED"/>
    <property type="match status" value="1"/>
</dbReference>
<dbReference type="Pfam" id="PF00153">
    <property type="entry name" value="Mito_carr"/>
    <property type="match status" value="3"/>
</dbReference>
<dbReference type="PRINTS" id="PR00926">
    <property type="entry name" value="MITOCARRIER"/>
</dbReference>
<dbReference type="SUPFAM" id="SSF103506">
    <property type="entry name" value="Mitochondrial carrier"/>
    <property type="match status" value="1"/>
</dbReference>
<dbReference type="PROSITE" id="PS50920">
    <property type="entry name" value="SOLCAR"/>
    <property type="match status" value="3"/>
</dbReference>
<proteinExistence type="evidence at transcript level"/>
<comment type="function">
    <text evidence="1 2">Probable mitochondrial transporter required for glutathione import into mitochondria. Glutathione, which plays key roles in oxidative metabolism, is produced exclusively in the cytosol and is imported in many organelles (By similarity). Mitochondrial glutathione is required for the activity and stability of proteins containing iron-sulfur clusters (By similarity).</text>
</comment>
<comment type="catalytic activity">
    <reaction evidence="2">
        <text>glutathione(in) = glutathione(out)</text>
        <dbReference type="Rhea" id="RHEA:74819"/>
        <dbReference type="ChEBI" id="CHEBI:57925"/>
    </reaction>
</comment>
<comment type="subcellular location">
    <subcellularLocation>
        <location evidence="3">Mitochondrion inner membrane</location>
        <topology evidence="4">Multi-pass membrane protein</topology>
    </subcellularLocation>
</comment>
<comment type="similarity">
    <text evidence="5">Belongs to the mitochondrial carrier (TC 2.A.29) family.</text>
</comment>
<accession>Q6P316</accession>